<organismHost>
    <name type="scientific">Gallus gallus</name>
    <name type="common">Chicken</name>
    <dbReference type="NCBI Taxonomy" id="9031"/>
</organismHost>
<dbReference type="EMBL" id="AF243438">
    <property type="protein sequence ID" value="AAG14188.1"/>
    <property type="molecule type" value="Genomic_DNA"/>
</dbReference>
<dbReference type="RefSeq" id="YP_001033925.1">
    <property type="nucleotide sequence ID" value="NC_002229.3"/>
</dbReference>
<dbReference type="GeneID" id="4811471"/>
<dbReference type="KEGG" id="vg:4811471"/>
<dbReference type="Proteomes" id="UP000008072">
    <property type="component" value="Segment"/>
</dbReference>
<dbReference type="InterPro" id="IPR006930">
    <property type="entry name" value="Herpes_pp38"/>
</dbReference>
<dbReference type="Pfam" id="PF04846">
    <property type="entry name" value="Herpes_pp38"/>
    <property type="match status" value="1"/>
</dbReference>
<accession>Q77MT0</accession>
<accession>Q69310</accession>
<proteinExistence type="predicted"/>
<name>PP24_GAHVM</name>
<protein>
    <recommendedName>
        <fullName>Phosphoprotein pp24</fullName>
    </recommendedName>
</protein>
<feature type="chain" id="PRO_0000406589" description="Phosphoprotein pp24">
    <location>
        <begin position="1"/>
        <end position="155"/>
    </location>
</feature>
<feature type="region of interest" description="Disordered" evidence="2">
    <location>
        <begin position="1"/>
        <end position="50"/>
    </location>
</feature>
<feature type="coiled-coil region" evidence="1">
    <location>
        <begin position="76"/>
        <end position="107"/>
    </location>
</feature>
<feature type="compositionally biased region" description="Basic and acidic residues" evidence="2">
    <location>
        <begin position="34"/>
        <end position="50"/>
    </location>
</feature>
<keyword id="KW-0175">Coiled coil</keyword>
<keyword id="KW-1185">Reference proteome</keyword>
<evidence type="ECO:0000255" key="1"/>
<evidence type="ECO:0000256" key="2">
    <source>
        <dbReference type="SAM" id="MobiDB-lite"/>
    </source>
</evidence>
<sequence>MEFEAEHEGLTASWVAPAPQGGKGAEGRAGVADEAGHGKTEAECAEDGEKCGDAEMSALDRVQRDHGDKHTESTSRKRIEAKYMDLLVEAERENKNLRKKYNIILDVSTKILVFGTCIMFATGTLIGKGTKIQVPVCNSTNLALAFLAGFLTRHV</sequence>
<organism>
    <name type="scientific">Gallid herpesvirus 2 (strain Chicken/Md5/ATCC VR-987)</name>
    <name type="common">GaHV-2</name>
    <name type="synonym">Marek's disease herpesvirus type 1</name>
    <dbReference type="NCBI Taxonomy" id="10389"/>
    <lineage>
        <taxon>Viruses</taxon>
        <taxon>Duplodnaviria</taxon>
        <taxon>Heunggongvirae</taxon>
        <taxon>Peploviricota</taxon>
        <taxon>Herviviricetes</taxon>
        <taxon>Herpesvirales</taxon>
        <taxon>Orthoherpesviridae</taxon>
        <taxon>Alphaherpesvirinae</taxon>
        <taxon>Mardivirus</taxon>
        <taxon>Mardivirus gallidalpha2</taxon>
        <taxon>Gallid alphaherpesvirus 2</taxon>
    </lineage>
</organism>
<reference key="1">
    <citation type="journal article" date="2000" name="J. Virol.">
        <title>The genome of a very virulent Marek's disease virus.</title>
        <authorList>
            <person name="Tulman E.R."/>
            <person name="Afonso C.L."/>
            <person name="Lu Z."/>
            <person name="Zsak L."/>
            <person name="Rock D.L."/>
            <person name="Kutish G.F."/>
        </authorList>
    </citation>
    <scope>NUCLEOTIDE SEQUENCE [LARGE SCALE GENOMIC DNA]</scope>
</reference>
<gene>
    <name type="primary">MDV008</name>
</gene>